<evidence type="ECO:0000250" key="1">
    <source>
        <dbReference type="UniProtKB" id="O74213"/>
    </source>
</evidence>
<evidence type="ECO:0000255" key="2"/>
<evidence type="ECO:0000255" key="3">
    <source>
        <dbReference type="PROSITE-ProRule" id="PRU00498"/>
    </source>
</evidence>
<evidence type="ECO:0000255" key="4">
    <source>
        <dbReference type="PROSITE-ProRule" id="PRU10052"/>
    </source>
</evidence>
<evidence type="ECO:0000305" key="5"/>
<dbReference type="EC" id="3.2.1.15"/>
<dbReference type="EMBL" id="AB011818">
    <property type="protein sequence ID" value="BAA25103.1"/>
    <property type="molecule type" value="Genomic_DNA"/>
</dbReference>
<dbReference type="EMBL" id="Z49653">
    <property type="protein sequence ID" value="CAA89686.1"/>
    <property type="molecule type" value="Genomic_DNA"/>
</dbReference>
<dbReference type="EMBL" id="AY558092">
    <property type="protein sequence ID" value="AAS56418.1"/>
    <property type="molecule type" value="Genomic_DNA"/>
</dbReference>
<dbReference type="EMBL" id="BK006943">
    <property type="protein sequence ID" value="DAA08938.1"/>
    <property type="molecule type" value="Genomic_DNA"/>
</dbReference>
<dbReference type="PIR" id="S57182">
    <property type="entry name" value="S57182"/>
</dbReference>
<dbReference type="RefSeq" id="NP_012687.3">
    <property type="nucleotide sequence ID" value="NM_001181811.3"/>
</dbReference>
<dbReference type="SMR" id="P47180"/>
<dbReference type="BioGRID" id="33908">
    <property type="interactions" value="35"/>
</dbReference>
<dbReference type="FunCoup" id="P47180">
    <property type="interactions" value="213"/>
</dbReference>
<dbReference type="STRING" id="4932.YJR153W"/>
<dbReference type="CAZy" id="GH28">
    <property type="family name" value="Glycoside Hydrolase Family 28"/>
</dbReference>
<dbReference type="GlyCosmos" id="P47180">
    <property type="glycosylation" value="2 sites, No reported glycans"/>
</dbReference>
<dbReference type="GlyGen" id="P47180">
    <property type="glycosylation" value="2 sites"/>
</dbReference>
<dbReference type="PaxDb" id="4932-YJR153W"/>
<dbReference type="EnsemblFungi" id="YJR153W_mRNA">
    <property type="protein sequence ID" value="YJR153W"/>
    <property type="gene ID" value="YJR153W"/>
</dbReference>
<dbReference type="GeneID" id="853618"/>
<dbReference type="KEGG" id="sce:YJR153W"/>
<dbReference type="AGR" id="SGD:S000003914"/>
<dbReference type="SGD" id="S000003914">
    <property type="gene designation" value="PGU1"/>
</dbReference>
<dbReference type="VEuPathDB" id="FungiDB:YJR153W"/>
<dbReference type="eggNOG" id="ENOG502QTAW">
    <property type="taxonomic scope" value="Eukaryota"/>
</dbReference>
<dbReference type="HOGENOM" id="CLU_040116_0_0_1"/>
<dbReference type="InParanoid" id="P47180"/>
<dbReference type="OMA" id="GSTIKFM"/>
<dbReference type="OrthoDB" id="1546079at2759"/>
<dbReference type="BioCyc" id="YEAST:YJR153W-MONOMER"/>
<dbReference type="BRENDA" id="3.2.1.15">
    <property type="organism ID" value="984"/>
</dbReference>
<dbReference type="BioGRID-ORCS" id="853618">
    <property type="hits" value="6 hits in 10 CRISPR screens"/>
</dbReference>
<dbReference type="PRO" id="PR:P47180"/>
<dbReference type="Proteomes" id="UP000002311">
    <property type="component" value="Chromosome X"/>
</dbReference>
<dbReference type="RNAct" id="P47180">
    <property type="molecule type" value="protein"/>
</dbReference>
<dbReference type="GO" id="GO:0005576">
    <property type="term" value="C:extracellular region"/>
    <property type="evidence" value="ECO:0000314"/>
    <property type="project" value="SGD"/>
</dbReference>
<dbReference type="GO" id="GO:0004650">
    <property type="term" value="F:polygalacturonase activity"/>
    <property type="evidence" value="ECO:0000314"/>
    <property type="project" value="SGD"/>
</dbReference>
<dbReference type="GO" id="GO:0071555">
    <property type="term" value="P:cell wall organization"/>
    <property type="evidence" value="ECO:0007669"/>
    <property type="project" value="UniProtKB-KW"/>
</dbReference>
<dbReference type="GO" id="GO:0045490">
    <property type="term" value="P:pectin catabolic process"/>
    <property type="evidence" value="ECO:0000314"/>
    <property type="project" value="SGD"/>
</dbReference>
<dbReference type="FunFam" id="2.160.20.10:FF:000002">
    <property type="entry name" value="Endopolygalacturonase D"/>
    <property type="match status" value="1"/>
</dbReference>
<dbReference type="Gene3D" id="2.160.20.10">
    <property type="entry name" value="Single-stranded right-handed beta-helix, Pectin lyase-like"/>
    <property type="match status" value="1"/>
</dbReference>
<dbReference type="InterPro" id="IPR000743">
    <property type="entry name" value="Glyco_hydro_28"/>
</dbReference>
<dbReference type="InterPro" id="IPR050434">
    <property type="entry name" value="Glycosyl_hydrlase_28"/>
</dbReference>
<dbReference type="InterPro" id="IPR006626">
    <property type="entry name" value="PbH1"/>
</dbReference>
<dbReference type="InterPro" id="IPR012334">
    <property type="entry name" value="Pectin_lyas_fold"/>
</dbReference>
<dbReference type="InterPro" id="IPR011050">
    <property type="entry name" value="Pectin_lyase_fold/virulence"/>
</dbReference>
<dbReference type="PANTHER" id="PTHR31884">
    <property type="entry name" value="POLYGALACTURONASE"/>
    <property type="match status" value="1"/>
</dbReference>
<dbReference type="PANTHER" id="PTHR31884:SF1">
    <property type="entry name" value="POLYGALACTURONASE"/>
    <property type="match status" value="1"/>
</dbReference>
<dbReference type="Pfam" id="PF00295">
    <property type="entry name" value="Glyco_hydro_28"/>
    <property type="match status" value="1"/>
</dbReference>
<dbReference type="SMART" id="SM00710">
    <property type="entry name" value="PbH1"/>
    <property type="match status" value="5"/>
</dbReference>
<dbReference type="SUPFAM" id="SSF51126">
    <property type="entry name" value="Pectin lyase-like"/>
    <property type="match status" value="1"/>
</dbReference>
<dbReference type="PROSITE" id="PS00502">
    <property type="entry name" value="POLYGALACTURONASE"/>
    <property type="match status" value="1"/>
</dbReference>
<name>PGLR_YEAST</name>
<sequence>MISANSLLISTLCAFAIATPLSKRDSCTLTGSSLSSLSTVKKCSSIVIKDLTVPAGQTLDLTGLSSGTTVTFEGTTTFQYKEWSGPLISISGSKISVVGASGHTIDGQGAKWWDGLGDSGKVKPKFVKLALTGTSKVTGLNIKNAPHQVFSINKCSDLTISDITIDIRDGDSAGGHNTDGFDVGSSSNVLIQGCTVYNQDDCIAVNSGSTIKFMNNYCYNGHGISVGSVGGRSDNTVNGFWAENNHVINSDNGLRIKTVEGATGTVTNVNFISNKISGIKSYGIVIEGDYLNSKTTGTATGGVPISNLVMKDITGSVNSTAKRVKILVKNATNWQWSGVSITGGSSYSGCSGIPSGSGASC</sequence>
<keyword id="KW-0961">Cell wall biogenesis/degradation</keyword>
<keyword id="KW-1015">Disulfide bond</keyword>
<keyword id="KW-0325">Glycoprotein</keyword>
<keyword id="KW-0326">Glycosidase</keyword>
<keyword id="KW-0378">Hydrolase</keyword>
<keyword id="KW-1185">Reference proteome</keyword>
<keyword id="KW-0677">Repeat</keyword>
<keyword id="KW-0732">Signal</keyword>
<reference key="1">
    <citation type="submission" date="1998-03" db="EMBL/GenBank/DDBJ databases">
        <title>Endo-polygalacturonase gene.</title>
        <authorList>
            <person name="Hirose N."/>
            <person name="Kishida M."/>
            <person name="Kawasaki H."/>
            <person name="Sakai T."/>
        </authorList>
    </citation>
    <scope>NUCLEOTIDE SEQUENCE [GENOMIC DNA]</scope>
    <source>
        <strain>SSM52</strain>
    </source>
</reference>
<reference key="2">
    <citation type="journal article" date="1998" name="FEMS Microbiol. Lett.">
        <title>Cloning, molecular characterization, and expression of an endo-polygalacturonase-encoding gene from Saccharomyces cerevisiae IM1-8b.</title>
        <authorList>
            <person name="Blanco P."/>
            <person name="Sieiro C."/>
            <person name="Reboredo N.M."/>
            <person name="Villa T.G."/>
        </authorList>
    </citation>
    <scope>NUCLEOTIDE SEQUENCE [GENOMIC DNA]</scope>
</reference>
<reference key="3">
    <citation type="journal article" date="1996" name="EMBO J.">
        <title>Complete nucleotide sequence of Saccharomyces cerevisiae chromosome X.</title>
        <authorList>
            <person name="Galibert F."/>
            <person name="Alexandraki D."/>
            <person name="Baur A."/>
            <person name="Boles E."/>
            <person name="Chalwatzis N."/>
            <person name="Chuat J.-C."/>
            <person name="Coster F."/>
            <person name="Cziepluch C."/>
            <person name="de Haan M."/>
            <person name="Domdey H."/>
            <person name="Durand P."/>
            <person name="Entian K.-D."/>
            <person name="Gatius M."/>
            <person name="Goffeau A."/>
            <person name="Grivell L.A."/>
            <person name="Hennemann A."/>
            <person name="Herbert C.J."/>
            <person name="Heumann K."/>
            <person name="Hilger F."/>
            <person name="Hollenberg C.P."/>
            <person name="Huang M.-E."/>
            <person name="Jacq C."/>
            <person name="Jauniaux J.-C."/>
            <person name="Katsoulou C."/>
            <person name="Kirchrath L."/>
            <person name="Kleine K."/>
            <person name="Kordes E."/>
            <person name="Koetter P."/>
            <person name="Liebl S."/>
            <person name="Louis E.J."/>
            <person name="Manus V."/>
            <person name="Mewes H.-W."/>
            <person name="Miosga T."/>
            <person name="Obermaier B."/>
            <person name="Perea J."/>
            <person name="Pohl T.M."/>
            <person name="Portetelle D."/>
            <person name="Pujol A."/>
            <person name="Purnelle B."/>
            <person name="Ramezani Rad M."/>
            <person name="Rasmussen S.W."/>
            <person name="Rose M."/>
            <person name="Rossau R."/>
            <person name="Schaaff-Gerstenschlaeger I."/>
            <person name="Smits P.H.M."/>
            <person name="Scarcez T."/>
            <person name="Soriano N."/>
            <person name="To Van D."/>
            <person name="Tzermia M."/>
            <person name="Van Broekhoven A."/>
            <person name="Vandenbol M."/>
            <person name="Wedler H."/>
            <person name="von Wettstein D."/>
            <person name="Wambutt R."/>
            <person name="Zagulski M."/>
            <person name="Zollner A."/>
            <person name="Karpfinger-Hartl L."/>
        </authorList>
    </citation>
    <scope>NUCLEOTIDE SEQUENCE [LARGE SCALE GENOMIC DNA]</scope>
    <source>
        <strain>ATCC 204508 / S288c</strain>
    </source>
</reference>
<reference key="4">
    <citation type="journal article" date="2014" name="G3 (Bethesda)">
        <title>The reference genome sequence of Saccharomyces cerevisiae: Then and now.</title>
        <authorList>
            <person name="Engel S.R."/>
            <person name="Dietrich F.S."/>
            <person name="Fisk D.G."/>
            <person name="Binkley G."/>
            <person name="Balakrishnan R."/>
            <person name="Costanzo M.C."/>
            <person name="Dwight S.S."/>
            <person name="Hitz B.C."/>
            <person name="Karra K."/>
            <person name="Nash R.S."/>
            <person name="Weng S."/>
            <person name="Wong E.D."/>
            <person name="Lloyd P."/>
            <person name="Skrzypek M.S."/>
            <person name="Miyasato S.R."/>
            <person name="Simison M."/>
            <person name="Cherry J.M."/>
        </authorList>
    </citation>
    <scope>GENOME REANNOTATION</scope>
    <source>
        <strain>ATCC 204508 / S288c</strain>
    </source>
</reference>
<reference key="5">
    <citation type="journal article" date="2007" name="Genome Res.">
        <title>Approaching a complete repository of sequence-verified protein-encoding clones for Saccharomyces cerevisiae.</title>
        <authorList>
            <person name="Hu Y."/>
            <person name="Rolfs A."/>
            <person name="Bhullar B."/>
            <person name="Murthy T.V.S."/>
            <person name="Zhu C."/>
            <person name="Berger M.F."/>
            <person name="Camargo A.A."/>
            <person name="Kelley F."/>
            <person name="McCarron S."/>
            <person name="Jepson D."/>
            <person name="Richardson A."/>
            <person name="Raphael J."/>
            <person name="Moreira D."/>
            <person name="Taycher E."/>
            <person name="Zuo D."/>
            <person name="Mohr S."/>
            <person name="Kane M.F."/>
            <person name="Williamson J."/>
            <person name="Simpson A.J.G."/>
            <person name="Bulyk M.L."/>
            <person name="Harlow E."/>
            <person name="Marsischky G."/>
            <person name="Kolodner R.D."/>
            <person name="LaBaer J."/>
        </authorList>
    </citation>
    <scope>NUCLEOTIDE SEQUENCE [GENOMIC DNA]</scope>
    <source>
        <strain>ATCC 204508 / S288c</strain>
    </source>
</reference>
<reference key="6">
    <citation type="journal article" date="1994" name="Can. J. Microbiol.">
        <title>Production and partial characterization of an endopolygalacturonase from Saccharomyces cerevisiae.</title>
        <authorList>
            <person name="Blanco P."/>
            <person name="Sieiro C."/>
            <person name="Diaz A."/>
            <person name="Villa T.G."/>
        </authorList>
    </citation>
    <scope>CHARACTERIZATION</scope>
    <source>
        <strain>CECT 1389</strain>
    </source>
</reference>
<accession>P47180</accession>
<accession>D6VWX2</accession>
<accession>E9P8V0</accession>
<feature type="signal peptide" evidence="2">
    <location>
        <begin position="1"/>
        <end position="18"/>
    </location>
</feature>
<feature type="chain" id="PRO_0000024797" description="Polygalacturonase">
    <location>
        <begin position="19"/>
        <end position="361"/>
    </location>
</feature>
<feature type="repeat" description="PbH1 1" evidence="2">
    <location>
        <begin position="155"/>
        <end position="185"/>
    </location>
</feature>
<feature type="repeat" description="PbH1 2" evidence="2">
    <location>
        <begin position="186"/>
        <end position="207"/>
    </location>
</feature>
<feature type="repeat" description="PbH1 3" evidence="2">
    <location>
        <begin position="208"/>
        <end position="228"/>
    </location>
</feature>
<feature type="repeat" description="PbH1 4" evidence="2">
    <location>
        <begin position="237"/>
        <end position="258"/>
    </location>
</feature>
<feature type="repeat" description="PbH1 5" evidence="2">
    <location>
        <begin position="266"/>
        <end position="288"/>
    </location>
</feature>
<feature type="active site" description="Proton donor" evidence="1">
    <location>
        <position position="200"/>
    </location>
</feature>
<feature type="active site" evidence="4">
    <location>
        <position position="222"/>
    </location>
</feature>
<feature type="glycosylation site" description="N-linked (GlcNAc...) asparagine" evidence="3">
    <location>
        <position position="318"/>
    </location>
</feature>
<feature type="glycosylation site" description="N-linked (GlcNAc...) asparagine" evidence="3">
    <location>
        <position position="330"/>
    </location>
</feature>
<feature type="disulfide bond" evidence="1">
    <location>
        <begin position="27"/>
        <end position="43"/>
    </location>
</feature>
<feature type="disulfide bond" evidence="1">
    <location>
        <begin position="202"/>
        <end position="218"/>
    </location>
</feature>
<feature type="disulfide bond" evidence="1">
    <location>
        <begin position="350"/>
        <end position="361"/>
    </location>
</feature>
<feature type="sequence conflict" description="In Ref. 5; AAS56418." evidence="5" ref="5">
    <original>K</original>
    <variation>R</variation>
    <location>
        <position position="23"/>
    </location>
</feature>
<comment type="catalytic activity">
    <reaction>
        <text>(1,4-alpha-D-galacturonosyl)n+m + H2O = (1,4-alpha-D-galacturonosyl)n + (1,4-alpha-D-galacturonosyl)m.</text>
        <dbReference type="EC" id="3.2.1.15"/>
    </reaction>
</comment>
<comment type="similarity">
    <text evidence="5">Belongs to the glycosyl hydrolase 28 family.</text>
</comment>
<protein>
    <recommendedName>
        <fullName>Polygalacturonase</fullName>
        <shortName>PG</shortName>
        <ecNumber>3.2.1.15</ecNumber>
    </recommendedName>
    <alternativeName>
        <fullName>PGase SM</fullName>
    </alternativeName>
    <alternativeName>
        <fullName>Pectinase</fullName>
    </alternativeName>
</protein>
<organism>
    <name type="scientific">Saccharomyces cerevisiae (strain ATCC 204508 / S288c)</name>
    <name type="common">Baker's yeast</name>
    <dbReference type="NCBI Taxonomy" id="559292"/>
    <lineage>
        <taxon>Eukaryota</taxon>
        <taxon>Fungi</taxon>
        <taxon>Dikarya</taxon>
        <taxon>Ascomycota</taxon>
        <taxon>Saccharomycotina</taxon>
        <taxon>Saccharomycetes</taxon>
        <taxon>Saccharomycetales</taxon>
        <taxon>Saccharomycetaceae</taxon>
        <taxon>Saccharomyces</taxon>
    </lineage>
</organism>
<proteinExistence type="evidence at protein level"/>
<gene>
    <name type="primary">PGU1</name>
    <name type="synonym">PGL1</name>
    <name type="synonym">PSM1</name>
    <name type="ordered locus">YJR153W</name>
    <name type="ORF">J2235</name>
</gene>